<reference key="1">
    <citation type="journal article" date="1999" name="Nat. Genet.">
        <title>Comparative genomes of Chlamydia pneumoniae and C. trachomatis.</title>
        <authorList>
            <person name="Kalman S."/>
            <person name="Mitchell W.P."/>
            <person name="Marathe R."/>
            <person name="Lammel C.J."/>
            <person name="Fan J."/>
            <person name="Hyman R.W."/>
            <person name="Olinger L."/>
            <person name="Grimwood J."/>
            <person name="Davis R.W."/>
            <person name="Stephens R.S."/>
        </authorList>
    </citation>
    <scope>NUCLEOTIDE SEQUENCE [LARGE SCALE GENOMIC DNA]</scope>
    <source>
        <strain>CWL029</strain>
    </source>
</reference>
<reference key="2">
    <citation type="journal article" date="2000" name="Nucleic Acids Res.">
        <title>Genome sequences of Chlamydia trachomatis MoPn and Chlamydia pneumoniae AR39.</title>
        <authorList>
            <person name="Read T.D."/>
            <person name="Brunham R.C."/>
            <person name="Shen C."/>
            <person name="Gill S.R."/>
            <person name="Heidelberg J.F."/>
            <person name="White O."/>
            <person name="Hickey E.K."/>
            <person name="Peterson J.D."/>
            <person name="Utterback T.R."/>
            <person name="Berry K.J."/>
            <person name="Bass S."/>
            <person name="Linher K.D."/>
            <person name="Weidman J.F."/>
            <person name="Khouri H.M."/>
            <person name="Craven B."/>
            <person name="Bowman C."/>
            <person name="Dodson R.J."/>
            <person name="Gwinn M.L."/>
            <person name="Nelson W.C."/>
            <person name="DeBoy R.T."/>
            <person name="Kolonay J.F."/>
            <person name="McClarty G."/>
            <person name="Salzberg S.L."/>
            <person name="Eisen J.A."/>
            <person name="Fraser C.M."/>
        </authorList>
    </citation>
    <scope>NUCLEOTIDE SEQUENCE [LARGE SCALE GENOMIC DNA]</scope>
    <source>
        <strain>AR39</strain>
    </source>
</reference>
<reference key="3">
    <citation type="journal article" date="2000" name="Nucleic Acids Res.">
        <title>Comparison of whole genome sequences of Chlamydia pneumoniae J138 from Japan and CWL029 from USA.</title>
        <authorList>
            <person name="Shirai M."/>
            <person name="Hirakawa H."/>
            <person name="Kimoto M."/>
            <person name="Tabuchi M."/>
            <person name="Kishi F."/>
            <person name="Ouchi K."/>
            <person name="Shiba T."/>
            <person name="Ishii K."/>
            <person name="Hattori M."/>
            <person name="Kuhara S."/>
            <person name="Nakazawa T."/>
        </authorList>
    </citation>
    <scope>NUCLEOTIDE SEQUENCE [LARGE SCALE GENOMIC DNA]</scope>
    <source>
        <strain>J138</strain>
    </source>
</reference>
<reference key="4">
    <citation type="submission" date="2002-05" db="EMBL/GenBank/DDBJ databases">
        <title>The genome sequence of Chlamydia pneumoniae TW183 and comparison with other Chlamydia strains based on whole genome sequence analysis.</title>
        <authorList>
            <person name="Geng M.M."/>
            <person name="Schuhmacher A."/>
            <person name="Muehldorfer I."/>
            <person name="Bensch K.W."/>
            <person name="Schaefer K.P."/>
            <person name="Schneider S."/>
            <person name="Pohl T."/>
            <person name="Essig A."/>
            <person name="Marre R."/>
            <person name="Melchers K."/>
        </authorList>
    </citation>
    <scope>NUCLEOTIDE SEQUENCE [LARGE SCALE GENOMIC DNA]</scope>
    <source>
        <strain>TW-183</strain>
    </source>
</reference>
<comment type="function">
    <text>Hydrolysis of 6-phosphogluconolactone to 6-phosphogluconate.</text>
</comment>
<comment type="catalytic activity">
    <reaction>
        <text>6-phospho-D-glucono-1,5-lactone + H2O = 6-phospho-D-gluconate + H(+)</text>
        <dbReference type="Rhea" id="RHEA:12556"/>
        <dbReference type="ChEBI" id="CHEBI:15377"/>
        <dbReference type="ChEBI" id="CHEBI:15378"/>
        <dbReference type="ChEBI" id="CHEBI:57955"/>
        <dbReference type="ChEBI" id="CHEBI:58759"/>
        <dbReference type="EC" id="3.1.1.31"/>
    </reaction>
</comment>
<comment type="pathway">
    <text>Carbohydrate degradation; pentose phosphate pathway; D-ribulose 5-phosphate from D-glucose 6-phosphate (oxidative stage): step 2/3.</text>
</comment>
<comment type="similarity">
    <text evidence="1">Belongs to the glucosamine/galactosamine-6-phosphate isomerase family. 6-phosphogluconolactonase subfamily.</text>
</comment>
<comment type="sequence caution" evidence="1">
    <conflict type="erroneous initiation">
        <sequence resource="EMBL-CDS" id="AAF73681"/>
    </conflict>
    <text>Extended N-terminus.</text>
</comment>
<comment type="sequence caution" evidence="1">
    <conflict type="erroneous initiation">
        <sequence resource="EMBL-CDS" id="AAP98178"/>
    </conflict>
    <text>Extended N-terminus.</text>
</comment>
<comment type="sequence caution" evidence="1">
    <conflict type="erroneous termination">
        <sequence resource="EMBL-CDS" id="BAA98449"/>
    </conflict>
    <text>Truncated C-terminus.</text>
</comment>
<sequence>MATLINFNDTNKLLLTKQPSLFIDLASKDWIASANQAIKQRGAFYVALSGGKTPLEIYKDIVINKDKLIDPSKIFLFWGDERLAPITSSESNYGQAMSILRDLNIPDEQIFRMETENPDGAKKYQELIENKIPDASFDMIMLGLGEDGHTLSLFSNTSALEEENDLVVFNSVPHLETERMTLTFPCVHKGKHVVVYVQGENKKPILKSVFFSEGREEKLYPIERVGRDRSPLFWIISPESYDIADFDNISSIYKMDIL</sequence>
<accession>Q9Z8U5</accession>
<accession>Q9JSH4</accession>
<accession>Q9K256</accession>
<keyword id="KW-0378">Hydrolase</keyword>
<gene>
    <name type="primary">pgl</name>
    <name type="synonym">devB</name>
    <name type="ordered locus">CPn_0239</name>
    <name type="ordered locus">CP_0523</name>
    <name type="ordered locus">CPj0239</name>
    <name type="ordered locus">CpB0245</name>
</gene>
<feature type="chain" id="PRO_0000090092" description="6-phosphogluconolactonase">
    <location>
        <begin position="1"/>
        <end position="258"/>
    </location>
</feature>
<feature type="sequence conflict" description="In Ref. 3; BAA98449." evidence="1" ref="3">
    <original>V</original>
    <variation>G</variation>
    <location>
        <position position="46"/>
    </location>
</feature>
<dbReference type="EC" id="3.1.1.31"/>
<dbReference type="EMBL" id="AE001363">
    <property type="protein sequence ID" value="AAD18392.1"/>
    <property type="molecule type" value="Genomic_DNA"/>
</dbReference>
<dbReference type="EMBL" id="AE002161">
    <property type="protein sequence ID" value="AAF73681.1"/>
    <property type="status" value="ALT_INIT"/>
    <property type="molecule type" value="Genomic_DNA"/>
</dbReference>
<dbReference type="EMBL" id="BA000008">
    <property type="protein sequence ID" value="BAA98449.1"/>
    <property type="status" value="ALT_SEQ"/>
    <property type="molecule type" value="Genomic_DNA"/>
</dbReference>
<dbReference type="EMBL" id="AE009440">
    <property type="protein sequence ID" value="AAP98178.1"/>
    <property type="status" value="ALT_INIT"/>
    <property type="molecule type" value="Genomic_DNA"/>
</dbReference>
<dbReference type="PIR" id="D72103">
    <property type="entry name" value="D72103"/>
</dbReference>
<dbReference type="PIR" id="G86520">
    <property type="entry name" value="G86520"/>
</dbReference>
<dbReference type="RefSeq" id="NP_224448.1">
    <property type="nucleotide sequence ID" value="NC_000922.1"/>
</dbReference>
<dbReference type="RefSeq" id="WP_010882891.1">
    <property type="nucleotide sequence ID" value="NZ_LN847257.1"/>
</dbReference>
<dbReference type="SMR" id="Q9Z8U5"/>
<dbReference type="STRING" id="406984.CPK_ORF00748"/>
<dbReference type="GeneID" id="45050286"/>
<dbReference type="KEGG" id="cpa:CP_0523"/>
<dbReference type="KEGG" id="cpj:devB"/>
<dbReference type="KEGG" id="cpn:CPn_0239"/>
<dbReference type="KEGG" id="cpt:CpB0245"/>
<dbReference type="PATRIC" id="fig|115713.3.peg.269"/>
<dbReference type="eggNOG" id="COG0363">
    <property type="taxonomic scope" value="Bacteria"/>
</dbReference>
<dbReference type="HOGENOM" id="CLU_053947_2_0_0"/>
<dbReference type="OrthoDB" id="9810967at2"/>
<dbReference type="UniPathway" id="UPA00115">
    <property type="reaction ID" value="UER00409"/>
</dbReference>
<dbReference type="Proteomes" id="UP000000583">
    <property type="component" value="Chromosome"/>
</dbReference>
<dbReference type="Proteomes" id="UP000000801">
    <property type="component" value="Chromosome"/>
</dbReference>
<dbReference type="GO" id="GO:0017057">
    <property type="term" value="F:6-phosphogluconolactonase activity"/>
    <property type="evidence" value="ECO:0007669"/>
    <property type="project" value="UniProtKB-EC"/>
</dbReference>
<dbReference type="GO" id="GO:0005975">
    <property type="term" value="P:carbohydrate metabolic process"/>
    <property type="evidence" value="ECO:0007669"/>
    <property type="project" value="InterPro"/>
</dbReference>
<dbReference type="GO" id="GO:0006098">
    <property type="term" value="P:pentose-phosphate shunt"/>
    <property type="evidence" value="ECO:0007669"/>
    <property type="project" value="UniProtKB-UniPathway"/>
</dbReference>
<dbReference type="CDD" id="cd01400">
    <property type="entry name" value="6PGL"/>
    <property type="match status" value="1"/>
</dbReference>
<dbReference type="Gene3D" id="3.40.50.1360">
    <property type="match status" value="1"/>
</dbReference>
<dbReference type="InterPro" id="IPR005900">
    <property type="entry name" value="6-phosphogluconolactonase_DevB"/>
</dbReference>
<dbReference type="InterPro" id="IPR006148">
    <property type="entry name" value="Glc/Gal-6P_isomerase"/>
</dbReference>
<dbReference type="InterPro" id="IPR037171">
    <property type="entry name" value="NagB/RpiA_transferase-like"/>
</dbReference>
<dbReference type="InterPro" id="IPR039104">
    <property type="entry name" value="PGLS"/>
</dbReference>
<dbReference type="NCBIfam" id="TIGR01198">
    <property type="entry name" value="pgl"/>
    <property type="match status" value="1"/>
</dbReference>
<dbReference type="PANTHER" id="PTHR11054">
    <property type="entry name" value="6-PHOSPHOGLUCONOLACTONASE"/>
    <property type="match status" value="1"/>
</dbReference>
<dbReference type="PANTHER" id="PTHR11054:SF0">
    <property type="entry name" value="6-PHOSPHOGLUCONOLACTONASE"/>
    <property type="match status" value="1"/>
</dbReference>
<dbReference type="Pfam" id="PF01182">
    <property type="entry name" value="Glucosamine_iso"/>
    <property type="match status" value="1"/>
</dbReference>
<dbReference type="SUPFAM" id="SSF100950">
    <property type="entry name" value="NagB/RpiA/CoA transferase-like"/>
    <property type="match status" value="1"/>
</dbReference>
<evidence type="ECO:0000305" key="1"/>
<protein>
    <recommendedName>
        <fullName>6-phosphogluconolactonase</fullName>
        <shortName>6PGL</shortName>
        <ecNumber>3.1.1.31</ecNumber>
    </recommendedName>
</protein>
<name>6PGL_CHLPN</name>
<proteinExistence type="inferred from homology"/>
<organism>
    <name type="scientific">Chlamydia pneumoniae</name>
    <name type="common">Chlamydophila pneumoniae</name>
    <dbReference type="NCBI Taxonomy" id="83558"/>
    <lineage>
        <taxon>Bacteria</taxon>
        <taxon>Pseudomonadati</taxon>
        <taxon>Chlamydiota</taxon>
        <taxon>Chlamydiia</taxon>
        <taxon>Chlamydiales</taxon>
        <taxon>Chlamydiaceae</taxon>
        <taxon>Chlamydia/Chlamydophila group</taxon>
        <taxon>Chlamydia</taxon>
    </lineage>
</organism>